<feature type="chain" id="PRO_0000366135" description="Lupeol synthase 5">
    <location>
        <begin position="1"/>
        <end position="763"/>
    </location>
</feature>
<feature type="repeat" description="PFTB 1">
    <location>
        <begin position="149"/>
        <end position="190"/>
    </location>
</feature>
<feature type="repeat" description="PFTB 2">
    <location>
        <begin position="515"/>
        <end position="556"/>
    </location>
</feature>
<feature type="repeat" description="PFTB 3">
    <location>
        <begin position="592"/>
        <end position="632"/>
    </location>
</feature>
<feature type="repeat" description="PFTB 4">
    <location>
        <begin position="641"/>
        <end position="682"/>
    </location>
</feature>
<feature type="repeat" description="PFTB 5">
    <location>
        <begin position="703"/>
        <end position="744"/>
    </location>
</feature>
<feature type="active site" description="Proton donor" evidence="1">
    <location>
        <position position="486"/>
    </location>
</feature>
<comment type="function">
    <text evidence="2">Multifunctional enzyme that converts oxidosqualene to tirucalla-7,21-diene-3beta-ol and two other triterpene monoalcohols.</text>
</comment>
<comment type="similarity">
    <text evidence="3">Belongs to the terpene cyclase/mutase family.</text>
</comment>
<protein>
    <recommendedName>
        <fullName>Lupeol synthase 5</fullName>
        <shortName>AtLUP5</shortName>
        <ecNumber>5.4.99.-</ecNumber>
    </recommendedName>
</protein>
<dbReference type="EC" id="5.4.99.-"/>
<dbReference type="EMBL" id="AF489920">
    <property type="protein sequence ID" value="AAN77001.1"/>
    <property type="molecule type" value="mRNA"/>
</dbReference>
<dbReference type="EMBL" id="AC007152">
    <property type="protein sequence ID" value="AAF98208.1"/>
    <property type="molecule type" value="Genomic_DNA"/>
</dbReference>
<dbReference type="EMBL" id="CP002684">
    <property type="protein sequence ID" value="AEE34578.1"/>
    <property type="molecule type" value="Genomic_DNA"/>
</dbReference>
<dbReference type="EMBL" id="CP002684">
    <property type="protein sequence ID" value="ANM60852.1"/>
    <property type="molecule type" value="Genomic_DNA"/>
</dbReference>
<dbReference type="EMBL" id="CP002684">
    <property type="protein sequence ID" value="ANM60854.1"/>
    <property type="molecule type" value="Genomic_DNA"/>
</dbReference>
<dbReference type="EMBL" id="AY062741">
    <property type="protein sequence ID" value="AAL32819.1"/>
    <property type="molecule type" value="mRNA"/>
</dbReference>
<dbReference type="EMBL" id="BT000138">
    <property type="protein sequence ID" value="AAN15457.1"/>
    <property type="molecule type" value="mRNA"/>
</dbReference>
<dbReference type="PIR" id="E96693">
    <property type="entry name" value="E96693"/>
</dbReference>
<dbReference type="RefSeq" id="NP_001323105.1">
    <property type="nucleotide sequence ID" value="NM_001334260.1"/>
</dbReference>
<dbReference type="RefSeq" id="NP_001323107.1">
    <property type="nucleotide sequence ID" value="NM_001334261.1"/>
</dbReference>
<dbReference type="RefSeq" id="NP_176868.1">
    <property type="nucleotide sequence ID" value="NM_105367.3"/>
</dbReference>
<dbReference type="SMR" id="Q9FZI2"/>
<dbReference type="FunCoup" id="Q9FZI2">
    <property type="interactions" value="736"/>
</dbReference>
<dbReference type="STRING" id="3702.Q9FZI2"/>
<dbReference type="PaxDb" id="3702-AT1G66960.1"/>
<dbReference type="ProteomicsDB" id="238506"/>
<dbReference type="EnsemblPlants" id="AT1G66960.1">
    <property type="protein sequence ID" value="AT1G66960.1"/>
    <property type="gene ID" value="AT1G66960"/>
</dbReference>
<dbReference type="EnsemblPlants" id="AT1G66960.3">
    <property type="protein sequence ID" value="AT1G66960.3"/>
    <property type="gene ID" value="AT1G66960"/>
</dbReference>
<dbReference type="EnsemblPlants" id="AT1G66960.4">
    <property type="protein sequence ID" value="AT1G66960.4"/>
    <property type="gene ID" value="AT1G66960"/>
</dbReference>
<dbReference type="GeneID" id="843014"/>
<dbReference type="Gramene" id="AT1G66960.1">
    <property type="protein sequence ID" value="AT1G66960.1"/>
    <property type="gene ID" value="AT1G66960"/>
</dbReference>
<dbReference type="Gramene" id="AT1G66960.3">
    <property type="protein sequence ID" value="AT1G66960.3"/>
    <property type="gene ID" value="AT1G66960"/>
</dbReference>
<dbReference type="Gramene" id="AT1G66960.4">
    <property type="protein sequence ID" value="AT1G66960.4"/>
    <property type="gene ID" value="AT1G66960"/>
</dbReference>
<dbReference type="KEGG" id="ath:AT1G66960"/>
<dbReference type="Araport" id="AT1G66960"/>
<dbReference type="TAIR" id="AT1G66960">
    <property type="gene designation" value="LUP5"/>
</dbReference>
<dbReference type="eggNOG" id="KOG0497">
    <property type="taxonomic scope" value="Eukaryota"/>
</dbReference>
<dbReference type="HOGENOM" id="CLU_009074_2_1_1"/>
<dbReference type="InParanoid" id="Q9FZI2"/>
<dbReference type="OMA" id="GHWACEI"/>
<dbReference type="PhylomeDB" id="Q9FZI2"/>
<dbReference type="PRO" id="PR:Q9FZI2"/>
<dbReference type="Proteomes" id="UP000006548">
    <property type="component" value="Chromosome 1"/>
</dbReference>
<dbReference type="ExpressionAtlas" id="Q9FZI2">
    <property type="expression patterns" value="baseline and differential"/>
</dbReference>
<dbReference type="GO" id="GO:0005811">
    <property type="term" value="C:lipid droplet"/>
    <property type="evidence" value="ECO:0007669"/>
    <property type="project" value="InterPro"/>
</dbReference>
<dbReference type="GO" id="GO:0031559">
    <property type="term" value="F:oxidosqualene cyclase activity"/>
    <property type="evidence" value="ECO:0007669"/>
    <property type="project" value="UniProtKB-ARBA"/>
</dbReference>
<dbReference type="GO" id="GO:0016104">
    <property type="term" value="P:triterpenoid biosynthetic process"/>
    <property type="evidence" value="ECO:0007669"/>
    <property type="project" value="InterPro"/>
</dbReference>
<dbReference type="CDD" id="cd02892">
    <property type="entry name" value="SQCY_1"/>
    <property type="match status" value="1"/>
</dbReference>
<dbReference type="FunFam" id="1.50.10.20:FF:000044">
    <property type="entry name" value="Lupeol synthase"/>
    <property type="match status" value="1"/>
</dbReference>
<dbReference type="FunFam" id="1.50.10.20:FF:000011">
    <property type="entry name" value="Terpene cyclase/mutase family member"/>
    <property type="match status" value="1"/>
</dbReference>
<dbReference type="Gene3D" id="1.50.10.20">
    <property type="match status" value="2"/>
</dbReference>
<dbReference type="InterPro" id="IPR032696">
    <property type="entry name" value="SQ_cyclase_C"/>
</dbReference>
<dbReference type="InterPro" id="IPR032697">
    <property type="entry name" value="SQ_cyclase_N"/>
</dbReference>
<dbReference type="InterPro" id="IPR018333">
    <property type="entry name" value="Squalene_cyclase"/>
</dbReference>
<dbReference type="InterPro" id="IPR002365">
    <property type="entry name" value="Terpene_synthase_CS"/>
</dbReference>
<dbReference type="InterPro" id="IPR008930">
    <property type="entry name" value="Terpenoid_cyclase/PrenylTrfase"/>
</dbReference>
<dbReference type="NCBIfam" id="TIGR01787">
    <property type="entry name" value="squalene_cyclas"/>
    <property type="match status" value="1"/>
</dbReference>
<dbReference type="PANTHER" id="PTHR11764:SF52">
    <property type="entry name" value="AMYRIN SYNTHASE LUP2-RELATED"/>
    <property type="match status" value="1"/>
</dbReference>
<dbReference type="PANTHER" id="PTHR11764">
    <property type="entry name" value="TERPENE CYCLASE/MUTASE FAMILY MEMBER"/>
    <property type="match status" value="1"/>
</dbReference>
<dbReference type="Pfam" id="PF13243">
    <property type="entry name" value="SQHop_cyclase_C"/>
    <property type="match status" value="1"/>
</dbReference>
<dbReference type="Pfam" id="PF13249">
    <property type="entry name" value="SQHop_cyclase_N"/>
    <property type="match status" value="1"/>
</dbReference>
<dbReference type="SUPFAM" id="SSF48239">
    <property type="entry name" value="Terpenoid cyclases/Protein prenyltransferases"/>
    <property type="match status" value="2"/>
</dbReference>
<dbReference type="PROSITE" id="PS01074">
    <property type="entry name" value="TERPENE_SYNTHASES"/>
    <property type="match status" value="1"/>
</dbReference>
<proteinExistence type="evidence at transcript level"/>
<gene>
    <name type="primary">LUP5</name>
    <name type="ordered locus">At1g66960</name>
    <name type="ORF">F1O19.4</name>
</gene>
<accession>Q9FZI2</accession>
<reference key="1">
    <citation type="submission" date="2002-03" db="EMBL/GenBank/DDBJ databases">
        <title>Triterpene synthases from Arabidopsis thaliana.</title>
        <authorList>
            <person name="Benveniste P."/>
            <person name="Nave P."/>
            <person name="Schaller H."/>
        </authorList>
    </citation>
    <scope>NUCLEOTIDE SEQUENCE [MRNA]</scope>
    <source>
        <strain>cv. Columbia</strain>
    </source>
</reference>
<reference key="2">
    <citation type="journal article" date="2000" name="Nature">
        <title>Sequence and analysis of chromosome 1 of the plant Arabidopsis thaliana.</title>
        <authorList>
            <person name="Theologis A."/>
            <person name="Ecker J.R."/>
            <person name="Palm C.J."/>
            <person name="Federspiel N.A."/>
            <person name="Kaul S."/>
            <person name="White O."/>
            <person name="Alonso J."/>
            <person name="Altafi H."/>
            <person name="Araujo R."/>
            <person name="Bowman C.L."/>
            <person name="Brooks S.Y."/>
            <person name="Buehler E."/>
            <person name="Chan A."/>
            <person name="Chao Q."/>
            <person name="Chen H."/>
            <person name="Cheuk R.F."/>
            <person name="Chin C.W."/>
            <person name="Chung M.K."/>
            <person name="Conn L."/>
            <person name="Conway A.B."/>
            <person name="Conway A.R."/>
            <person name="Creasy T.H."/>
            <person name="Dewar K."/>
            <person name="Dunn P."/>
            <person name="Etgu P."/>
            <person name="Feldblyum T.V."/>
            <person name="Feng J.-D."/>
            <person name="Fong B."/>
            <person name="Fujii C.Y."/>
            <person name="Gill J.E."/>
            <person name="Goldsmith A.D."/>
            <person name="Haas B."/>
            <person name="Hansen N.F."/>
            <person name="Hughes B."/>
            <person name="Huizar L."/>
            <person name="Hunter J.L."/>
            <person name="Jenkins J."/>
            <person name="Johnson-Hopson C."/>
            <person name="Khan S."/>
            <person name="Khaykin E."/>
            <person name="Kim C.J."/>
            <person name="Koo H.L."/>
            <person name="Kremenetskaia I."/>
            <person name="Kurtz D.B."/>
            <person name="Kwan A."/>
            <person name="Lam B."/>
            <person name="Langin-Hooper S."/>
            <person name="Lee A."/>
            <person name="Lee J.M."/>
            <person name="Lenz C.A."/>
            <person name="Li J.H."/>
            <person name="Li Y.-P."/>
            <person name="Lin X."/>
            <person name="Liu S.X."/>
            <person name="Liu Z.A."/>
            <person name="Luros J.S."/>
            <person name="Maiti R."/>
            <person name="Marziali A."/>
            <person name="Militscher J."/>
            <person name="Miranda M."/>
            <person name="Nguyen M."/>
            <person name="Nierman W.C."/>
            <person name="Osborne B.I."/>
            <person name="Pai G."/>
            <person name="Peterson J."/>
            <person name="Pham P.K."/>
            <person name="Rizzo M."/>
            <person name="Rooney T."/>
            <person name="Rowley D."/>
            <person name="Sakano H."/>
            <person name="Salzberg S.L."/>
            <person name="Schwartz J.R."/>
            <person name="Shinn P."/>
            <person name="Southwick A.M."/>
            <person name="Sun H."/>
            <person name="Tallon L.J."/>
            <person name="Tambunga G."/>
            <person name="Toriumi M.J."/>
            <person name="Town C.D."/>
            <person name="Utterback T."/>
            <person name="Van Aken S."/>
            <person name="Vaysberg M."/>
            <person name="Vysotskaia V.S."/>
            <person name="Walker M."/>
            <person name="Wu D."/>
            <person name="Yu G."/>
            <person name="Fraser C.M."/>
            <person name="Venter J.C."/>
            <person name="Davis R.W."/>
        </authorList>
    </citation>
    <scope>NUCLEOTIDE SEQUENCE [LARGE SCALE GENOMIC DNA]</scope>
    <source>
        <strain>cv. Columbia</strain>
    </source>
</reference>
<reference key="3">
    <citation type="journal article" date="2017" name="Plant J.">
        <title>Araport11: a complete reannotation of the Arabidopsis thaliana reference genome.</title>
        <authorList>
            <person name="Cheng C.Y."/>
            <person name="Krishnakumar V."/>
            <person name="Chan A.P."/>
            <person name="Thibaud-Nissen F."/>
            <person name="Schobel S."/>
            <person name="Town C.D."/>
        </authorList>
    </citation>
    <scope>GENOME REANNOTATION</scope>
    <source>
        <strain>cv. Columbia</strain>
    </source>
</reference>
<reference key="4">
    <citation type="journal article" date="2003" name="Science">
        <title>Empirical analysis of transcriptional activity in the Arabidopsis genome.</title>
        <authorList>
            <person name="Yamada K."/>
            <person name="Lim J."/>
            <person name="Dale J.M."/>
            <person name="Chen H."/>
            <person name="Shinn P."/>
            <person name="Palm C.J."/>
            <person name="Southwick A.M."/>
            <person name="Wu H.C."/>
            <person name="Kim C.J."/>
            <person name="Nguyen M."/>
            <person name="Pham P.K."/>
            <person name="Cheuk R.F."/>
            <person name="Karlin-Newmann G."/>
            <person name="Liu S.X."/>
            <person name="Lam B."/>
            <person name="Sakano H."/>
            <person name="Wu T."/>
            <person name="Yu G."/>
            <person name="Miranda M."/>
            <person name="Quach H.L."/>
            <person name="Tripp M."/>
            <person name="Chang C.H."/>
            <person name="Lee J.M."/>
            <person name="Toriumi M.J."/>
            <person name="Chan M.M."/>
            <person name="Tang C.C."/>
            <person name="Onodera C.S."/>
            <person name="Deng J.M."/>
            <person name="Akiyama K."/>
            <person name="Ansari Y."/>
            <person name="Arakawa T."/>
            <person name="Banh J."/>
            <person name="Banno F."/>
            <person name="Bowser L."/>
            <person name="Brooks S.Y."/>
            <person name="Carninci P."/>
            <person name="Chao Q."/>
            <person name="Choy N."/>
            <person name="Enju A."/>
            <person name="Goldsmith A.D."/>
            <person name="Gurjal M."/>
            <person name="Hansen N.F."/>
            <person name="Hayashizaki Y."/>
            <person name="Johnson-Hopson C."/>
            <person name="Hsuan V.W."/>
            <person name="Iida K."/>
            <person name="Karnes M."/>
            <person name="Khan S."/>
            <person name="Koesema E."/>
            <person name="Ishida J."/>
            <person name="Jiang P.X."/>
            <person name="Jones T."/>
            <person name="Kawai J."/>
            <person name="Kamiya A."/>
            <person name="Meyers C."/>
            <person name="Nakajima M."/>
            <person name="Narusaka M."/>
            <person name="Seki M."/>
            <person name="Sakurai T."/>
            <person name="Satou M."/>
            <person name="Tamse R."/>
            <person name="Vaysberg M."/>
            <person name="Wallender E.K."/>
            <person name="Wong C."/>
            <person name="Yamamura Y."/>
            <person name="Yuan S."/>
            <person name="Shinozaki K."/>
            <person name="Davis R.W."/>
            <person name="Theologis A."/>
            <person name="Ecker J.R."/>
        </authorList>
    </citation>
    <scope>NUCLEOTIDE SEQUENCE [LARGE SCALE MRNA]</scope>
    <source>
        <strain>cv. Columbia</strain>
    </source>
</reference>
<reference key="5">
    <citation type="journal article" date="2001" name="Plant Mol. Biol.">
        <title>Molecular cloning and expression in yeast of 2,3-oxidosqualene-triterpenoid cyclases from Arabidopsis thaliana.</title>
        <authorList>
            <person name="Husselstein-Muller T."/>
            <person name="Schaller H."/>
            <person name="Benveniste P."/>
        </authorList>
    </citation>
    <scope>IDENTIFICATION</scope>
    <scope>NOMENCLATURE</scope>
</reference>
<reference key="6">
    <citation type="journal article" date="2003" name="Pure Appl. Chem.">
        <title>Functional genomics approach to the study of triterpene biosynthesis.</title>
        <authorList>
            <person name="Ebizuka Y."/>
            <person name="Katsube Y."/>
            <person name="Tsutsumi T."/>
            <person name="Kushiro T."/>
            <person name="Shibuya M."/>
        </authorList>
    </citation>
    <scope>FUNCTION</scope>
</reference>
<keyword id="KW-0413">Isomerase</keyword>
<keyword id="KW-1185">Reference proteome</keyword>
<keyword id="KW-0677">Repeat</keyword>
<sequence>MWRLKVGEGKGKDPYLFSSNNFVGRQTWEFDPKAGTREERTAVEEARRSFFDNRSRVKPSSDLLWKMQFLKEAKFEQVIPPVKIDGGEAITYEKATNALRRGVAFLSALQASDGHWPGEFTGPLCMLPPLVFCLYITGHLEEVFDAEHRKEMLRYIYCHQNEDGGWGFHIESKSIMFTTTLNYICLRILGVGPDGGLENACKRARQWILSHGGVIYIPCWGKVWLSVLGIYDWSGVNPMPPEIWLLPYFLPIHLGKAFSYTRITYMPISYLYGKKFVGQITPLIMQLREELHLQPYEEINWNKARHLCAKEDKYYPHPLVQDLIWDALHTFVEPLLASWPINKLVRKKALQVAMKHIHYEDENSHYITIGCIEKNLCMLACWIDNPDGNHFKKHLSRIPDMMWVAEDGMKMQCFGSQLWMTGFAVQALLASDPRDETYDVLRRAHDYIKKSQVRDNPSGDFKSMYRHISKGGWTLSDRDHGWQVSDCTAEAAKCCMLLSTMPTDITGEKINLEQLYDSVNLMLSLQSENGGFTAWEPVRAYKWMELMNPTDLFANAMTEREYTECTSAVLQALVIFNQLYPDHRTKEITKSIEKAVQFIESKQLRDGSWYGSWGICFTYGTWFALCGLAAIGKTYNNCLSMRDGVHFLLNIQNEDGGWGESYMSCPEQRYIPLEGNRSNVVQTAWAMMALIHAGQAKRDLIPLHSAAKFIITSQLENGDFPQQELLGASMSTCMLHYSTYKDIFPPWALAEYRKAAFIHHADL</sequence>
<name>LUP5_ARATH</name>
<organism>
    <name type="scientific">Arabidopsis thaliana</name>
    <name type="common">Mouse-ear cress</name>
    <dbReference type="NCBI Taxonomy" id="3702"/>
    <lineage>
        <taxon>Eukaryota</taxon>
        <taxon>Viridiplantae</taxon>
        <taxon>Streptophyta</taxon>
        <taxon>Embryophyta</taxon>
        <taxon>Tracheophyta</taxon>
        <taxon>Spermatophyta</taxon>
        <taxon>Magnoliopsida</taxon>
        <taxon>eudicotyledons</taxon>
        <taxon>Gunneridae</taxon>
        <taxon>Pentapetalae</taxon>
        <taxon>rosids</taxon>
        <taxon>malvids</taxon>
        <taxon>Brassicales</taxon>
        <taxon>Brassicaceae</taxon>
        <taxon>Camelineae</taxon>
        <taxon>Arabidopsis</taxon>
    </lineage>
</organism>
<evidence type="ECO:0000250" key="1">
    <source>
        <dbReference type="UniProtKB" id="P48449"/>
    </source>
</evidence>
<evidence type="ECO:0000269" key="2">
    <source ref="6"/>
</evidence>
<evidence type="ECO:0000305" key="3"/>